<gene>
    <name evidence="1" type="primary">pdxA</name>
    <name type="ordered locus">SynRCC307_0033</name>
</gene>
<dbReference type="EC" id="1.1.1.262" evidence="1"/>
<dbReference type="EMBL" id="CT978603">
    <property type="protein sequence ID" value="CAK26936.1"/>
    <property type="molecule type" value="Genomic_DNA"/>
</dbReference>
<dbReference type="SMR" id="A5GPX7"/>
<dbReference type="STRING" id="316278.SynRCC307_0033"/>
<dbReference type="KEGG" id="syr:SynRCC307_0033"/>
<dbReference type="eggNOG" id="COG1995">
    <property type="taxonomic scope" value="Bacteria"/>
</dbReference>
<dbReference type="HOGENOM" id="CLU_040168_0_0_3"/>
<dbReference type="OrthoDB" id="9801783at2"/>
<dbReference type="UniPathway" id="UPA00244">
    <property type="reaction ID" value="UER00312"/>
</dbReference>
<dbReference type="Proteomes" id="UP000001115">
    <property type="component" value="Chromosome"/>
</dbReference>
<dbReference type="GO" id="GO:0005737">
    <property type="term" value="C:cytoplasm"/>
    <property type="evidence" value="ECO:0007669"/>
    <property type="project" value="UniProtKB-SubCell"/>
</dbReference>
<dbReference type="GO" id="GO:0050570">
    <property type="term" value="F:4-hydroxythreonine-4-phosphate dehydrogenase activity"/>
    <property type="evidence" value="ECO:0007669"/>
    <property type="project" value="UniProtKB-UniRule"/>
</dbReference>
<dbReference type="GO" id="GO:0046872">
    <property type="term" value="F:metal ion binding"/>
    <property type="evidence" value="ECO:0007669"/>
    <property type="project" value="UniProtKB-UniRule"/>
</dbReference>
<dbReference type="GO" id="GO:0051287">
    <property type="term" value="F:NAD binding"/>
    <property type="evidence" value="ECO:0007669"/>
    <property type="project" value="InterPro"/>
</dbReference>
<dbReference type="GO" id="GO:0042823">
    <property type="term" value="P:pyridoxal phosphate biosynthetic process"/>
    <property type="evidence" value="ECO:0007669"/>
    <property type="project" value="UniProtKB-UniRule"/>
</dbReference>
<dbReference type="GO" id="GO:0008615">
    <property type="term" value="P:pyridoxine biosynthetic process"/>
    <property type="evidence" value="ECO:0007669"/>
    <property type="project" value="UniProtKB-UniRule"/>
</dbReference>
<dbReference type="Gene3D" id="3.40.718.10">
    <property type="entry name" value="Isopropylmalate Dehydrogenase"/>
    <property type="match status" value="1"/>
</dbReference>
<dbReference type="HAMAP" id="MF_00536">
    <property type="entry name" value="PdxA"/>
    <property type="match status" value="1"/>
</dbReference>
<dbReference type="InterPro" id="IPR037510">
    <property type="entry name" value="PdxA"/>
</dbReference>
<dbReference type="InterPro" id="IPR005255">
    <property type="entry name" value="PdxA_fam"/>
</dbReference>
<dbReference type="NCBIfam" id="TIGR00557">
    <property type="entry name" value="pdxA"/>
    <property type="match status" value="1"/>
</dbReference>
<dbReference type="NCBIfam" id="NF002744">
    <property type="entry name" value="PRK02746.1"/>
    <property type="match status" value="1"/>
</dbReference>
<dbReference type="PANTHER" id="PTHR30004">
    <property type="entry name" value="4-HYDROXYTHREONINE-4-PHOSPHATE DEHYDROGENASE"/>
    <property type="match status" value="1"/>
</dbReference>
<dbReference type="PANTHER" id="PTHR30004:SF6">
    <property type="entry name" value="D-THREONATE 4-PHOSPHATE DEHYDROGENASE"/>
    <property type="match status" value="1"/>
</dbReference>
<dbReference type="Pfam" id="PF04166">
    <property type="entry name" value="PdxA"/>
    <property type="match status" value="1"/>
</dbReference>
<dbReference type="SUPFAM" id="SSF53659">
    <property type="entry name" value="Isocitrate/Isopropylmalate dehydrogenase-like"/>
    <property type="match status" value="1"/>
</dbReference>
<protein>
    <recommendedName>
        <fullName evidence="1">4-hydroxythreonine-4-phosphate dehydrogenase</fullName>
        <ecNumber evidence="1">1.1.1.262</ecNumber>
    </recommendedName>
    <alternativeName>
        <fullName evidence="1">4-(phosphohydroxy)-L-threonine dehydrogenase</fullName>
    </alternativeName>
</protein>
<sequence>MTRLAIALGDPAGIGAEVVLKALAHRPSLNPLLVGCRQWLQASYEQLLPCCHEPLADPSQLEILDEPLTEAITPGSISAAAGAASFGWLTRATEAVLDGRAQALVTAPIAKTAWHQAGHHYPGQTERLAELCGCDDAAMLFTARSPQSGWRFNTLLATTHIPLSSVPAALTPERLERRLGQLEDFCRRFRQRPRLRVAGLNPHAGEAGQLGTEEQRWITACLQAYQQRHNNLQLEGPVPPDTCWLGAAQAWNDSQHVEEGCDGYLALYHDQGLIPVKVLAFDQAVNTTLGLPFLRTSPDHGTGFDRAGQGSARGASMLAAIDTAVELG</sequence>
<keyword id="KW-0963">Cytoplasm</keyword>
<keyword id="KW-0479">Metal-binding</keyword>
<keyword id="KW-0520">NAD</keyword>
<keyword id="KW-0521">NADP</keyword>
<keyword id="KW-0560">Oxidoreductase</keyword>
<keyword id="KW-0664">Pyridoxine biosynthesis</keyword>
<keyword id="KW-1185">Reference proteome</keyword>
<evidence type="ECO:0000255" key="1">
    <source>
        <dbReference type="HAMAP-Rule" id="MF_00536"/>
    </source>
</evidence>
<comment type="function">
    <text evidence="1">Catalyzes the NAD(P)-dependent oxidation of 4-(phosphooxy)-L-threonine (HTP) into 2-amino-3-oxo-4-(phosphooxy)butyric acid which spontaneously decarboxylates to form 3-amino-2-oxopropyl phosphate (AHAP).</text>
</comment>
<comment type="catalytic activity">
    <reaction evidence="1">
        <text>4-(phosphooxy)-L-threonine + NAD(+) = 3-amino-2-oxopropyl phosphate + CO2 + NADH</text>
        <dbReference type="Rhea" id="RHEA:32275"/>
        <dbReference type="ChEBI" id="CHEBI:16526"/>
        <dbReference type="ChEBI" id="CHEBI:57279"/>
        <dbReference type="ChEBI" id="CHEBI:57540"/>
        <dbReference type="ChEBI" id="CHEBI:57945"/>
        <dbReference type="ChEBI" id="CHEBI:58452"/>
        <dbReference type="EC" id="1.1.1.262"/>
    </reaction>
</comment>
<comment type="cofactor">
    <cofactor evidence="1">
        <name>a divalent metal cation</name>
        <dbReference type="ChEBI" id="CHEBI:60240"/>
    </cofactor>
    <text evidence="1">Binds 1 divalent metal cation per subunit.</text>
</comment>
<comment type="pathway">
    <text evidence="1">Cofactor biosynthesis; pyridoxine 5'-phosphate biosynthesis; pyridoxine 5'-phosphate from D-erythrose 4-phosphate: step 4/5.</text>
</comment>
<comment type="subunit">
    <text evidence="1">Homodimer.</text>
</comment>
<comment type="subcellular location">
    <subcellularLocation>
        <location evidence="1">Cytoplasm</location>
    </subcellularLocation>
</comment>
<comment type="miscellaneous">
    <text evidence="1">The active site is located at the dimer interface.</text>
</comment>
<comment type="similarity">
    <text evidence="1">Belongs to the PdxA family.</text>
</comment>
<organism>
    <name type="scientific">Synechococcus sp. (strain RCC307)</name>
    <dbReference type="NCBI Taxonomy" id="316278"/>
    <lineage>
        <taxon>Bacteria</taxon>
        <taxon>Bacillati</taxon>
        <taxon>Cyanobacteriota</taxon>
        <taxon>Cyanophyceae</taxon>
        <taxon>Synechococcales</taxon>
        <taxon>Synechococcaceae</taxon>
        <taxon>Synechococcus</taxon>
    </lineage>
</organism>
<feature type="chain" id="PRO_1000051523" description="4-hydroxythreonine-4-phosphate dehydrogenase">
    <location>
        <begin position="1"/>
        <end position="328"/>
    </location>
</feature>
<feature type="binding site" evidence="1">
    <location>
        <position position="125"/>
    </location>
    <ligand>
        <name>substrate</name>
    </ligand>
</feature>
<feature type="binding site" evidence="1">
    <location>
        <position position="160"/>
    </location>
    <ligand>
        <name>a divalent metal cation</name>
        <dbReference type="ChEBI" id="CHEBI:60240"/>
        <note>ligand shared between dimeric partners</note>
    </ligand>
</feature>
<feature type="binding site" evidence="1">
    <location>
        <position position="203"/>
    </location>
    <ligand>
        <name>a divalent metal cation</name>
        <dbReference type="ChEBI" id="CHEBI:60240"/>
        <note>ligand shared between dimeric partners</note>
    </ligand>
</feature>
<feature type="binding site" evidence="1">
    <location>
        <position position="269"/>
    </location>
    <ligand>
        <name>a divalent metal cation</name>
        <dbReference type="ChEBI" id="CHEBI:60240"/>
        <note>ligand shared between dimeric partners</note>
    </ligand>
</feature>
<feature type="binding site" evidence="1">
    <location>
        <position position="277"/>
    </location>
    <ligand>
        <name>substrate</name>
    </ligand>
</feature>
<feature type="binding site" evidence="1">
    <location>
        <position position="286"/>
    </location>
    <ligand>
        <name>substrate</name>
    </ligand>
</feature>
<feature type="binding site" evidence="1">
    <location>
        <position position="295"/>
    </location>
    <ligand>
        <name>substrate</name>
    </ligand>
</feature>
<name>PDXA_SYNR3</name>
<reference key="1">
    <citation type="submission" date="2006-05" db="EMBL/GenBank/DDBJ databases">
        <authorList>
            <consortium name="Genoscope"/>
        </authorList>
    </citation>
    <scope>NUCLEOTIDE SEQUENCE [LARGE SCALE GENOMIC DNA]</scope>
    <source>
        <strain>RCC307</strain>
    </source>
</reference>
<proteinExistence type="inferred from homology"/>
<accession>A5GPX7</accession>